<reference key="1">
    <citation type="journal article" date="2009" name="J. Bacteriol.">
        <title>Complete genome sequence and comparative genome analysis of enteropathogenic Escherichia coli O127:H6 strain E2348/69.</title>
        <authorList>
            <person name="Iguchi A."/>
            <person name="Thomson N.R."/>
            <person name="Ogura Y."/>
            <person name="Saunders D."/>
            <person name="Ooka T."/>
            <person name="Henderson I.R."/>
            <person name="Harris D."/>
            <person name="Asadulghani M."/>
            <person name="Kurokawa K."/>
            <person name="Dean P."/>
            <person name="Kenny B."/>
            <person name="Quail M.A."/>
            <person name="Thurston S."/>
            <person name="Dougan G."/>
            <person name="Hayashi T."/>
            <person name="Parkhill J."/>
            <person name="Frankel G."/>
        </authorList>
    </citation>
    <scope>NUCLEOTIDE SEQUENCE [LARGE SCALE GENOMIC DNA]</scope>
    <source>
        <strain>E2348/69 / EPEC</strain>
    </source>
</reference>
<organism>
    <name type="scientific">Escherichia coli O127:H6 (strain E2348/69 / EPEC)</name>
    <dbReference type="NCBI Taxonomy" id="574521"/>
    <lineage>
        <taxon>Bacteria</taxon>
        <taxon>Pseudomonadati</taxon>
        <taxon>Pseudomonadota</taxon>
        <taxon>Gammaproteobacteria</taxon>
        <taxon>Enterobacterales</taxon>
        <taxon>Enterobacteriaceae</taxon>
        <taxon>Escherichia</taxon>
    </lineage>
</organism>
<feature type="chain" id="PRO_1000164069" description="H(+)/Cl(-) exchange transporter ClcA">
    <location>
        <begin position="1"/>
        <end position="473"/>
    </location>
</feature>
<feature type="topological domain" description="Cytoplasmic" evidence="1">
    <location>
        <begin position="1"/>
        <end position="32"/>
    </location>
</feature>
<feature type="transmembrane region" description="Helical" evidence="1">
    <location>
        <begin position="33"/>
        <end position="69"/>
    </location>
</feature>
<feature type="topological domain" description="Periplasmic" evidence="1">
    <location>
        <begin position="70"/>
        <end position="76"/>
    </location>
</feature>
<feature type="transmembrane region" description="Helical" evidence="1">
    <location>
        <begin position="77"/>
        <end position="100"/>
    </location>
</feature>
<feature type="intramembrane region" description="Helical" evidence="1">
    <location>
        <begin position="109"/>
        <end position="116"/>
    </location>
</feature>
<feature type="topological domain" description="Cytoplasmic" evidence="1">
    <location>
        <begin position="117"/>
        <end position="123"/>
    </location>
</feature>
<feature type="transmembrane region" description="Helical" evidence="1">
    <location>
        <begin position="124"/>
        <end position="141"/>
    </location>
</feature>
<feature type="transmembrane region" description="Helical" evidence="1">
    <location>
        <begin position="148"/>
        <end position="166"/>
    </location>
</feature>
<feature type="topological domain" description="Cytoplasmic" evidence="1">
    <location>
        <begin position="167"/>
        <end position="176"/>
    </location>
</feature>
<feature type="intramembrane region" description="Helical" evidence="1">
    <location>
        <begin position="177"/>
        <end position="189"/>
    </location>
</feature>
<feature type="intramembrane region" description="Helical" evidence="1">
    <location>
        <begin position="193"/>
        <end position="201"/>
    </location>
</feature>
<feature type="topological domain" description="Cytoplasmic" evidence="1">
    <location>
        <begin position="202"/>
        <end position="214"/>
    </location>
</feature>
<feature type="transmembrane region" description="Helical" evidence="1">
    <location>
        <begin position="215"/>
        <end position="232"/>
    </location>
</feature>
<feature type="topological domain" description="Periplasmic" evidence="1">
    <location>
        <begin position="233"/>
        <end position="252"/>
    </location>
</feature>
<feature type="transmembrane region" description="Helical" evidence="1">
    <location>
        <begin position="253"/>
        <end position="281"/>
    </location>
</feature>
<feature type="topological domain" description="Cytoplasmic" evidence="1">
    <location>
        <begin position="282"/>
        <end position="287"/>
    </location>
</feature>
<feature type="transmembrane region" description="Helical" evidence="1">
    <location>
        <begin position="288"/>
        <end position="309"/>
    </location>
</feature>
<feature type="topological domain" description="Periplasmic" evidence="1">
    <location>
        <begin position="310"/>
        <end position="329"/>
    </location>
</feature>
<feature type="transmembrane region" description="Helical" evidence="1">
    <location>
        <begin position="330"/>
        <end position="349"/>
    </location>
</feature>
<feature type="transmembrane region" description="Helical" evidence="1">
    <location>
        <begin position="355"/>
        <end position="376"/>
    </location>
</feature>
<feature type="topological domain" description="Periplasmic" evidence="1">
    <location>
        <begin position="377"/>
        <end position="386"/>
    </location>
</feature>
<feature type="intramembrane region" description="Helical" evidence="1">
    <location>
        <begin position="387"/>
        <end position="401"/>
    </location>
</feature>
<feature type="intramembrane region" description="Note=Loop between two helices" evidence="1">
    <location>
        <begin position="402"/>
        <end position="404"/>
    </location>
</feature>
<feature type="intramembrane region" description="Helical" evidence="1">
    <location>
        <begin position="405"/>
        <end position="416"/>
    </location>
</feature>
<feature type="intramembrane region" description="Note=Loop between two helices" evidence="1">
    <location>
        <begin position="417"/>
        <end position="421"/>
    </location>
</feature>
<feature type="transmembrane region" description="Helical" evidence="1">
    <location>
        <begin position="422"/>
        <end position="438"/>
    </location>
</feature>
<feature type="topological domain" description="Cytoplasmic" evidence="1">
    <location>
        <begin position="439"/>
        <end position="473"/>
    </location>
</feature>
<feature type="short sequence motif" description="Selectivity filter part_1" evidence="1">
    <location>
        <begin position="106"/>
        <end position="110"/>
    </location>
</feature>
<feature type="short sequence motif" description="Selectivity filter part_2" evidence="1">
    <location>
        <begin position="146"/>
        <end position="150"/>
    </location>
</feature>
<feature type="short sequence motif" description="Selectivity filter part_3" evidence="1">
    <location>
        <begin position="355"/>
        <end position="359"/>
    </location>
</feature>
<feature type="binding site" evidence="1">
    <location>
        <position position="107"/>
    </location>
    <ligand>
        <name>chloride</name>
        <dbReference type="ChEBI" id="CHEBI:17996"/>
    </ligand>
</feature>
<feature type="binding site" evidence="1">
    <location>
        <position position="356"/>
    </location>
    <ligand>
        <name>chloride</name>
        <dbReference type="ChEBI" id="CHEBI:17996"/>
    </ligand>
</feature>
<feature type="binding site" evidence="1">
    <location>
        <position position="357"/>
    </location>
    <ligand>
        <name>chloride</name>
        <dbReference type="ChEBI" id="CHEBI:17996"/>
    </ligand>
</feature>
<feature type="binding site" evidence="1">
    <location>
        <position position="445"/>
    </location>
    <ligand>
        <name>chloride</name>
        <dbReference type="ChEBI" id="CHEBI:17996"/>
    </ligand>
</feature>
<feature type="site" description="Mediates proton transfer from the outer aqueous phase to the interior of the protein; involved in linking H(+) and Cl(-) transport" evidence="1">
    <location>
        <position position="148"/>
    </location>
</feature>
<feature type="site" description="Mediates proton transfer from the protein to the inner aqueous phase" evidence="1">
    <location>
        <position position="203"/>
    </location>
</feature>
<comment type="function">
    <text evidence="1">Proton-coupled chloride transporter. Functions as antiport system and exchanges two chloride ions for 1 proton. Probably acts as an electrical shunt for an outwardly-directed proton pump that is linked to amino acid decarboxylation, as part of the extreme acid resistance (XAR) response.</text>
</comment>
<comment type="catalytic activity">
    <reaction evidence="1">
        <text>2 chloride(in) + H(+)(out) = 2 chloride(out) + H(+)(in)</text>
        <dbReference type="Rhea" id="RHEA:29567"/>
        <dbReference type="ChEBI" id="CHEBI:15378"/>
        <dbReference type="ChEBI" id="CHEBI:17996"/>
    </reaction>
</comment>
<comment type="subunit">
    <text evidence="1">Homodimer.</text>
</comment>
<comment type="subcellular location">
    <subcellularLocation>
        <location evidence="1">Cell inner membrane</location>
        <topology evidence="1">Multi-pass membrane protein</topology>
    </subcellularLocation>
</comment>
<comment type="similarity">
    <text evidence="1">Belongs to the chloride channel (TC 2.A.49) family. ClcA subfamily.</text>
</comment>
<evidence type="ECO:0000255" key="1">
    <source>
        <dbReference type="HAMAP-Rule" id="MF_01128"/>
    </source>
</evidence>
<gene>
    <name evidence="1" type="primary">clcA</name>
    <name evidence="1" type="synonym">eriC</name>
    <name type="ordered locus">E2348C_0162</name>
</gene>
<dbReference type="EMBL" id="FM180568">
    <property type="protein sequence ID" value="CAS07710.1"/>
    <property type="molecule type" value="Genomic_DNA"/>
</dbReference>
<dbReference type="RefSeq" id="WP_000845394.1">
    <property type="nucleotide sequence ID" value="NC_011601.1"/>
</dbReference>
<dbReference type="SMR" id="B7UIK2"/>
<dbReference type="GeneID" id="93777272"/>
<dbReference type="KEGG" id="ecg:E2348C_0162"/>
<dbReference type="HOGENOM" id="CLU_015263_7_0_6"/>
<dbReference type="Proteomes" id="UP000008205">
    <property type="component" value="Chromosome"/>
</dbReference>
<dbReference type="GO" id="GO:0005886">
    <property type="term" value="C:plasma membrane"/>
    <property type="evidence" value="ECO:0007669"/>
    <property type="project" value="UniProtKB-SubCell"/>
</dbReference>
<dbReference type="GO" id="GO:0015297">
    <property type="term" value="F:antiporter activity"/>
    <property type="evidence" value="ECO:0007669"/>
    <property type="project" value="UniProtKB-UniRule"/>
</dbReference>
<dbReference type="GO" id="GO:0005247">
    <property type="term" value="F:voltage-gated chloride channel activity"/>
    <property type="evidence" value="ECO:0007669"/>
    <property type="project" value="TreeGrafter"/>
</dbReference>
<dbReference type="CDD" id="cd01031">
    <property type="entry name" value="EriC"/>
    <property type="match status" value="1"/>
</dbReference>
<dbReference type="FunFam" id="1.10.3080.10:FF:000005">
    <property type="entry name" value="H(+)/Cl(-) exchange transporter ClcA"/>
    <property type="match status" value="1"/>
</dbReference>
<dbReference type="Gene3D" id="1.10.3080.10">
    <property type="entry name" value="Clc chloride channel"/>
    <property type="match status" value="1"/>
</dbReference>
<dbReference type="HAMAP" id="MF_01128">
    <property type="entry name" value="CLC_ClcA"/>
    <property type="match status" value="1"/>
</dbReference>
<dbReference type="InterPro" id="IPR023861">
    <property type="entry name" value="Cl-channel_ClcA"/>
</dbReference>
<dbReference type="InterPro" id="IPR014743">
    <property type="entry name" value="Cl-channel_core"/>
</dbReference>
<dbReference type="InterPro" id="IPR001807">
    <property type="entry name" value="ClC"/>
</dbReference>
<dbReference type="NCBIfam" id="NF003640">
    <property type="entry name" value="PRK05277.1"/>
    <property type="match status" value="1"/>
</dbReference>
<dbReference type="PANTHER" id="PTHR45711">
    <property type="entry name" value="CHLORIDE CHANNEL PROTEIN"/>
    <property type="match status" value="1"/>
</dbReference>
<dbReference type="PANTHER" id="PTHR45711:SF6">
    <property type="entry name" value="CHLORIDE CHANNEL PROTEIN"/>
    <property type="match status" value="1"/>
</dbReference>
<dbReference type="Pfam" id="PF00654">
    <property type="entry name" value="Voltage_CLC"/>
    <property type="match status" value="1"/>
</dbReference>
<dbReference type="PRINTS" id="PR00762">
    <property type="entry name" value="CLCHANNEL"/>
</dbReference>
<dbReference type="SUPFAM" id="SSF81340">
    <property type="entry name" value="Clc chloride channel"/>
    <property type="match status" value="1"/>
</dbReference>
<sequence length="473" mass="50349">MKTDTPSLETPQAARLRRRQLIRQLLERDKTPLAILFMAAVVGTLVGLAAVAFDKGVAWLQNQRMGALVHTADNYPLLLTVAFLCSAVLAMFGYFLVRKYAPEAGGSGIPEIEGALEDQRPVRWWRVLPVKFFGGLGTLGGGMVLGREGPTVQIGGNIGRMVLDIFRLKGDEARHTLLATGAAAGLAAAFNAPLAGILFIIEEMRPQFRYTLISIKAVFIGVIMSTIMYRIFNHEVALIDVGKLSDAPLNTLWLYLILGIIFGIFGPIFNKWVLGMQDLLHRVHGGNITKWVLMGGAIGGLCGLLGFVAPATSGGGFNLIPIATAGNFSMGMLVFIFVARVITTLLCFSSGAPGGIFAPMLALGTVLGTAFGMVAVELFPQYHLEAGTFAIAGMGALLAASIRAPLTGIILVLEMTDNYQLILPMIITGLGATLLAQFTGGKPLYSAILARTLAKQEAEQLARSKAASASENT</sequence>
<proteinExistence type="inferred from homology"/>
<name>CLCA_ECO27</name>
<accession>B7UIK2</accession>
<protein>
    <recommendedName>
        <fullName evidence="1">H(+)/Cl(-) exchange transporter ClcA</fullName>
    </recommendedName>
</protein>
<keyword id="KW-0050">Antiport</keyword>
<keyword id="KW-0997">Cell inner membrane</keyword>
<keyword id="KW-1003">Cell membrane</keyword>
<keyword id="KW-0868">Chloride</keyword>
<keyword id="KW-0406">Ion transport</keyword>
<keyword id="KW-0472">Membrane</keyword>
<keyword id="KW-1185">Reference proteome</keyword>
<keyword id="KW-0812">Transmembrane</keyword>
<keyword id="KW-1133">Transmembrane helix</keyword>
<keyword id="KW-0813">Transport</keyword>